<sequence length="127" mass="13756">MLKIMLAVFLGGGTGSVLRWWLGLRLNPVHHAIPVGTLTANLAGAFIIGAGLAWFNRMTHLDPMWKLLVTTGLCGGLTTFSTFSAEVVFLLQEGRIGWAGLNVALNLFGSFMMTALAFWLFSSLSVR</sequence>
<dbReference type="EMBL" id="CP000783">
    <property type="protein sequence ID" value="ABU77935.1"/>
    <property type="molecule type" value="Genomic_DNA"/>
</dbReference>
<dbReference type="RefSeq" id="WP_012125377.1">
    <property type="nucleotide sequence ID" value="NC_009778.1"/>
</dbReference>
<dbReference type="SMR" id="A7MNQ2"/>
<dbReference type="KEGG" id="esa:ESA_02703"/>
<dbReference type="PATRIC" id="fig|290339.8.peg.2402"/>
<dbReference type="HOGENOM" id="CLU_114342_3_3_6"/>
<dbReference type="Proteomes" id="UP000000260">
    <property type="component" value="Chromosome"/>
</dbReference>
<dbReference type="GO" id="GO:0005886">
    <property type="term" value="C:plasma membrane"/>
    <property type="evidence" value="ECO:0007669"/>
    <property type="project" value="UniProtKB-SubCell"/>
</dbReference>
<dbReference type="GO" id="GO:0062054">
    <property type="term" value="F:fluoride channel activity"/>
    <property type="evidence" value="ECO:0007669"/>
    <property type="project" value="UniProtKB-UniRule"/>
</dbReference>
<dbReference type="GO" id="GO:0046872">
    <property type="term" value="F:metal ion binding"/>
    <property type="evidence" value="ECO:0007669"/>
    <property type="project" value="UniProtKB-KW"/>
</dbReference>
<dbReference type="GO" id="GO:0140114">
    <property type="term" value="P:cellular detoxification of fluoride"/>
    <property type="evidence" value="ECO:0007669"/>
    <property type="project" value="UniProtKB-UniRule"/>
</dbReference>
<dbReference type="HAMAP" id="MF_00454">
    <property type="entry name" value="FluC"/>
    <property type="match status" value="1"/>
</dbReference>
<dbReference type="InterPro" id="IPR003691">
    <property type="entry name" value="FluC"/>
</dbReference>
<dbReference type="NCBIfam" id="TIGR00494">
    <property type="entry name" value="crcB"/>
    <property type="match status" value="1"/>
</dbReference>
<dbReference type="NCBIfam" id="NF010792">
    <property type="entry name" value="PRK14196.1"/>
    <property type="match status" value="1"/>
</dbReference>
<dbReference type="PANTHER" id="PTHR28259">
    <property type="entry name" value="FLUORIDE EXPORT PROTEIN 1-RELATED"/>
    <property type="match status" value="1"/>
</dbReference>
<dbReference type="PANTHER" id="PTHR28259:SF1">
    <property type="entry name" value="FLUORIDE EXPORT PROTEIN 1-RELATED"/>
    <property type="match status" value="1"/>
</dbReference>
<dbReference type="Pfam" id="PF02537">
    <property type="entry name" value="CRCB"/>
    <property type="match status" value="1"/>
</dbReference>
<proteinExistence type="inferred from homology"/>
<gene>
    <name evidence="1" type="primary">fluC</name>
    <name evidence="1" type="synonym">crcB</name>
    <name type="ordered locus">ESA_02703</name>
</gene>
<comment type="function">
    <text evidence="1">Fluoride-specific ion channel. Important for reducing fluoride concentration in the cell, thus reducing its toxicity.</text>
</comment>
<comment type="catalytic activity">
    <reaction evidence="1">
        <text>fluoride(in) = fluoride(out)</text>
        <dbReference type="Rhea" id="RHEA:76159"/>
        <dbReference type="ChEBI" id="CHEBI:17051"/>
    </reaction>
    <physiologicalReaction direction="left-to-right" evidence="1">
        <dbReference type="Rhea" id="RHEA:76160"/>
    </physiologicalReaction>
</comment>
<comment type="activity regulation">
    <text evidence="1">Na(+) is not transported, but it plays an essential structural role and its presence is essential for fluoride channel function.</text>
</comment>
<comment type="subcellular location">
    <subcellularLocation>
        <location evidence="1">Cell inner membrane</location>
        <topology evidence="1">Multi-pass membrane protein</topology>
    </subcellularLocation>
</comment>
<comment type="similarity">
    <text evidence="1">Belongs to the fluoride channel Fluc/FEX (TC 1.A.43) family.</text>
</comment>
<feature type="chain" id="PRO_1000026385" description="Fluoride-specific ion channel FluC">
    <location>
        <begin position="1"/>
        <end position="127"/>
    </location>
</feature>
<feature type="transmembrane region" description="Helical" evidence="1">
    <location>
        <begin position="4"/>
        <end position="24"/>
    </location>
</feature>
<feature type="transmembrane region" description="Helical" evidence="1">
    <location>
        <begin position="35"/>
        <end position="55"/>
    </location>
</feature>
<feature type="transmembrane region" description="Helical" evidence="1">
    <location>
        <begin position="71"/>
        <end position="91"/>
    </location>
</feature>
<feature type="transmembrane region" description="Helical" evidence="1">
    <location>
        <begin position="101"/>
        <end position="121"/>
    </location>
</feature>
<feature type="binding site" evidence="1">
    <location>
        <position position="75"/>
    </location>
    <ligand>
        <name>Na(+)</name>
        <dbReference type="ChEBI" id="CHEBI:29101"/>
        <note>structural</note>
    </ligand>
</feature>
<feature type="binding site" evidence="1">
    <location>
        <position position="78"/>
    </location>
    <ligand>
        <name>Na(+)</name>
        <dbReference type="ChEBI" id="CHEBI:29101"/>
        <note>structural</note>
    </ligand>
</feature>
<keyword id="KW-0997">Cell inner membrane</keyword>
<keyword id="KW-1003">Cell membrane</keyword>
<keyword id="KW-0407">Ion channel</keyword>
<keyword id="KW-0406">Ion transport</keyword>
<keyword id="KW-0472">Membrane</keyword>
<keyword id="KW-0479">Metal-binding</keyword>
<keyword id="KW-1185">Reference proteome</keyword>
<keyword id="KW-0915">Sodium</keyword>
<keyword id="KW-0812">Transmembrane</keyword>
<keyword id="KW-1133">Transmembrane helix</keyword>
<keyword id="KW-0813">Transport</keyword>
<evidence type="ECO:0000255" key="1">
    <source>
        <dbReference type="HAMAP-Rule" id="MF_00454"/>
    </source>
</evidence>
<reference key="1">
    <citation type="journal article" date="2010" name="PLoS ONE">
        <title>Genome sequence of Cronobacter sakazakii BAA-894 and comparative genomic hybridization analysis with other Cronobacter species.</title>
        <authorList>
            <person name="Kucerova E."/>
            <person name="Clifton S.W."/>
            <person name="Xia X.Q."/>
            <person name="Long F."/>
            <person name="Porwollik S."/>
            <person name="Fulton L."/>
            <person name="Fronick C."/>
            <person name="Minx P."/>
            <person name="Kyung K."/>
            <person name="Warren W."/>
            <person name="Fulton R."/>
            <person name="Feng D."/>
            <person name="Wollam A."/>
            <person name="Shah N."/>
            <person name="Bhonagiri V."/>
            <person name="Nash W.E."/>
            <person name="Hallsworth-Pepin K."/>
            <person name="Wilson R.K."/>
            <person name="McClelland M."/>
            <person name="Forsythe S.J."/>
        </authorList>
    </citation>
    <scope>NUCLEOTIDE SEQUENCE [LARGE SCALE GENOMIC DNA]</scope>
    <source>
        <strain>ATCC BAA-894</strain>
    </source>
</reference>
<protein>
    <recommendedName>
        <fullName evidence="1">Fluoride-specific ion channel FluC</fullName>
    </recommendedName>
</protein>
<accession>A7MNQ2</accession>
<name>FLUC_CROS8</name>
<organism>
    <name type="scientific">Cronobacter sakazakii (strain ATCC BAA-894)</name>
    <name type="common">Enterobacter sakazakii</name>
    <dbReference type="NCBI Taxonomy" id="290339"/>
    <lineage>
        <taxon>Bacteria</taxon>
        <taxon>Pseudomonadati</taxon>
        <taxon>Pseudomonadota</taxon>
        <taxon>Gammaproteobacteria</taxon>
        <taxon>Enterobacterales</taxon>
        <taxon>Enterobacteriaceae</taxon>
        <taxon>Cronobacter</taxon>
    </lineage>
</organism>